<reference key="1">
    <citation type="journal article" date="2004" name="Genome Res.">
        <title>The genome sequence of Mycoplasma mycoides subsp. mycoides SC type strain PG1T, the causative agent of contagious bovine pleuropneumonia (CBPP).</title>
        <authorList>
            <person name="Westberg J."/>
            <person name="Persson A."/>
            <person name="Holmberg A."/>
            <person name="Goesmann A."/>
            <person name="Lundeberg J."/>
            <person name="Johansson K.-E."/>
            <person name="Pettersson B."/>
            <person name="Uhlen M."/>
        </authorList>
    </citation>
    <scope>NUCLEOTIDE SEQUENCE [LARGE SCALE GENOMIC DNA]</scope>
    <source>
        <strain>CCUG 32753 / NCTC 10114 / PG1</strain>
    </source>
</reference>
<sequence length="668" mass="75656">MSKDKALLRINQLKEQLNLWSKQYYVDDNPSVDDTEYDLALKELISLETLYPELITSDSPSQKVGGMVSEKFLKITHKTPMLSLGNVFSFDEFLDFNTQISKISNTLDNQYVAELKIDGLSISLVYENGSLVSAATRGNGVVGEDVTINARTIKSIPLKISKKERVEVRGEIYLSKAEFEKINQKRLLNNEDLFINPRNAAAGTLRQLDSKIVASRNLDAFLYYYISDDSNNLTQYQSILKLNELGFKTNKETMLCKNLDEIKAYIDKYTNLKNDLDYQIDGIVFKINDKNLQNSLGFTSKIPKWAIAYKFPAEIKQTKLLDIFATVGRTGKITYNAKLEPVFLMGAKISAATLNNAEYIKTKDLRINSIVKIKKAGDVIPEVIEAIKDEDFYKLEKFKPALYCPNCHSLLEKNENEVDQFCINSSCSMKILRSLQHFSSREAMNIVSLGDRSLEILFNLKIIQNISDIYKLEEYKDQILAIDNFGLKSYLNLIDSINMSKNNSLEKVLFGLGIRHIGSKTAKILARKYQNIDNLMSASYDELIQINSIGESLALSIIDWFKIEDNLKLIDELKSFNINFNYLGAKINSDSIIANKSFVITGTLTRPREEFKTLIENNAGKVIGSISKQTDYLLAGNNVGSKLEKAKKLGVKIIDEQQFFDLLKSEKG</sequence>
<dbReference type="EC" id="6.5.1.2" evidence="1"/>
<dbReference type="EMBL" id="BX293980">
    <property type="protein sequence ID" value="CAE77382.1"/>
    <property type="molecule type" value="Genomic_DNA"/>
</dbReference>
<dbReference type="RefSeq" id="NP_975740.1">
    <property type="nucleotide sequence ID" value="NC_005364.2"/>
</dbReference>
<dbReference type="RefSeq" id="WP_011166932.1">
    <property type="nucleotide sequence ID" value="NC_005364.2"/>
</dbReference>
<dbReference type="SMR" id="Q6MSK8"/>
<dbReference type="STRING" id="272632.MSC_0764"/>
<dbReference type="KEGG" id="mmy:MSC_0764"/>
<dbReference type="PATRIC" id="fig|272632.4.peg.821"/>
<dbReference type="eggNOG" id="COG0272">
    <property type="taxonomic scope" value="Bacteria"/>
</dbReference>
<dbReference type="HOGENOM" id="CLU_007764_2_1_14"/>
<dbReference type="Proteomes" id="UP000001016">
    <property type="component" value="Chromosome"/>
</dbReference>
<dbReference type="GO" id="GO:0005829">
    <property type="term" value="C:cytosol"/>
    <property type="evidence" value="ECO:0007669"/>
    <property type="project" value="TreeGrafter"/>
</dbReference>
<dbReference type="GO" id="GO:0003911">
    <property type="term" value="F:DNA ligase (NAD+) activity"/>
    <property type="evidence" value="ECO:0007669"/>
    <property type="project" value="UniProtKB-UniRule"/>
</dbReference>
<dbReference type="GO" id="GO:0046872">
    <property type="term" value="F:metal ion binding"/>
    <property type="evidence" value="ECO:0007669"/>
    <property type="project" value="UniProtKB-KW"/>
</dbReference>
<dbReference type="GO" id="GO:0006281">
    <property type="term" value="P:DNA repair"/>
    <property type="evidence" value="ECO:0007669"/>
    <property type="project" value="UniProtKB-KW"/>
</dbReference>
<dbReference type="GO" id="GO:0006260">
    <property type="term" value="P:DNA replication"/>
    <property type="evidence" value="ECO:0007669"/>
    <property type="project" value="UniProtKB-KW"/>
</dbReference>
<dbReference type="CDD" id="cd17748">
    <property type="entry name" value="BRCT_DNA_ligase_like"/>
    <property type="match status" value="1"/>
</dbReference>
<dbReference type="CDD" id="cd00114">
    <property type="entry name" value="LIGANc"/>
    <property type="match status" value="1"/>
</dbReference>
<dbReference type="FunFam" id="1.10.150.20:FF:000006">
    <property type="entry name" value="DNA ligase"/>
    <property type="match status" value="1"/>
</dbReference>
<dbReference type="FunFam" id="3.30.470.30:FF:000001">
    <property type="entry name" value="DNA ligase"/>
    <property type="match status" value="1"/>
</dbReference>
<dbReference type="Gene3D" id="1.10.150.20">
    <property type="entry name" value="5' to 3' exonuclease, C-terminal subdomain"/>
    <property type="match status" value="2"/>
</dbReference>
<dbReference type="Gene3D" id="3.40.50.10190">
    <property type="entry name" value="BRCT domain"/>
    <property type="match status" value="1"/>
</dbReference>
<dbReference type="Gene3D" id="3.30.470.30">
    <property type="entry name" value="DNA ligase/mRNA capping enzyme"/>
    <property type="match status" value="1"/>
</dbReference>
<dbReference type="Gene3D" id="1.10.287.610">
    <property type="entry name" value="Helix hairpin bin"/>
    <property type="match status" value="1"/>
</dbReference>
<dbReference type="Gene3D" id="2.40.50.140">
    <property type="entry name" value="Nucleic acid-binding proteins"/>
    <property type="match status" value="1"/>
</dbReference>
<dbReference type="HAMAP" id="MF_01588">
    <property type="entry name" value="DNA_ligase_A"/>
    <property type="match status" value="1"/>
</dbReference>
<dbReference type="InterPro" id="IPR001357">
    <property type="entry name" value="BRCT_dom"/>
</dbReference>
<dbReference type="InterPro" id="IPR036420">
    <property type="entry name" value="BRCT_dom_sf"/>
</dbReference>
<dbReference type="InterPro" id="IPR041663">
    <property type="entry name" value="DisA/LigA_HHH"/>
</dbReference>
<dbReference type="InterPro" id="IPR001679">
    <property type="entry name" value="DNA_ligase"/>
</dbReference>
<dbReference type="InterPro" id="IPR018239">
    <property type="entry name" value="DNA_ligase_AS"/>
</dbReference>
<dbReference type="InterPro" id="IPR013839">
    <property type="entry name" value="DNAligase_adenylation"/>
</dbReference>
<dbReference type="InterPro" id="IPR013840">
    <property type="entry name" value="DNAligase_N"/>
</dbReference>
<dbReference type="InterPro" id="IPR012340">
    <property type="entry name" value="NA-bd_OB-fold"/>
</dbReference>
<dbReference type="InterPro" id="IPR004150">
    <property type="entry name" value="NAD_DNA_ligase_OB"/>
</dbReference>
<dbReference type="InterPro" id="IPR010994">
    <property type="entry name" value="RuvA_2-like"/>
</dbReference>
<dbReference type="InterPro" id="IPR004149">
    <property type="entry name" value="Znf_DNAligase_C4"/>
</dbReference>
<dbReference type="NCBIfam" id="TIGR00575">
    <property type="entry name" value="dnlj"/>
    <property type="match status" value="1"/>
</dbReference>
<dbReference type="NCBIfam" id="NF005932">
    <property type="entry name" value="PRK07956.1"/>
    <property type="match status" value="1"/>
</dbReference>
<dbReference type="PANTHER" id="PTHR23389">
    <property type="entry name" value="CHROMOSOME TRANSMISSION FIDELITY FACTOR 18"/>
    <property type="match status" value="1"/>
</dbReference>
<dbReference type="PANTHER" id="PTHR23389:SF9">
    <property type="entry name" value="DNA LIGASE"/>
    <property type="match status" value="1"/>
</dbReference>
<dbReference type="Pfam" id="PF00533">
    <property type="entry name" value="BRCT"/>
    <property type="match status" value="1"/>
</dbReference>
<dbReference type="Pfam" id="PF01653">
    <property type="entry name" value="DNA_ligase_aden"/>
    <property type="match status" value="1"/>
</dbReference>
<dbReference type="Pfam" id="PF03120">
    <property type="entry name" value="DNA_ligase_OB"/>
    <property type="match status" value="1"/>
</dbReference>
<dbReference type="Pfam" id="PF03119">
    <property type="entry name" value="DNA_ligase_ZBD"/>
    <property type="match status" value="1"/>
</dbReference>
<dbReference type="Pfam" id="PF12826">
    <property type="entry name" value="HHH_2"/>
    <property type="match status" value="1"/>
</dbReference>
<dbReference type="PIRSF" id="PIRSF001604">
    <property type="entry name" value="LigA"/>
    <property type="match status" value="1"/>
</dbReference>
<dbReference type="SMART" id="SM00292">
    <property type="entry name" value="BRCT"/>
    <property type="match status" value="1"/>
</dbReference>
<dbReference type="SMART" id="SM00532">
    <property type="entry name" value="LIGANc"/>
    <property type="match status" value="1"/>
</dbReference>
<dbReference type="SUPFAM" id="SSF52113">
    <property type="entry name" value="BRCT domain"/>
    <property type="match status" value="1"/>
</dbReference>
<dbReference type="SUPFAM" id="SSF56091">
    <property type="entry name" value="DNA ligase/mRNA capping enzyme, catalytic domain"/>
    <property type="match status" value="1"/>
</dbReference>
<dbReference type="SUPFAM" id="SSF50249">
    <property type="entry name" value="Nucleic acid-binding proteins"/>
    <property type="match status" value="1"/>
</dbReference>
<dbReference type="SUPFAM" id="SSF47781">
    <property type="entry name" value="RuvA domain 2-like"/>
    <property type="match status" value="1"/>
</dbReference>
<dbReference type="PROSITE" id="PS50172">
    <property type="entry name" value="BRCT"/>
    <property type="match status" value="1"/>
</dbReference>
<dbReference type="PROSITE" id="PS01055">
    <property type="entry name" value="DNA_LIGASE_N1"/>
    <property type="match status" value="1"/>
</dbReference>
<accession>Q6MSK8</accession>
<proteinExistence type="inferred from homology"/>
<organism>
    <name type="scientific">Mycoplasma mycoides subsp. mycoides SC (strain CCUG 32753 / NCTC 10114 / PG1)</name>
    <dbReference type="NCBI Taxonomy" id="272632"/>
    <lineage>
        <taxon>Bacteria</taxon>
        <taxon>Bacillati</taxon>
        <taxon>Mycoplasmatota</taxon>
        <taxon>Mollicutes</taxon>
        <taxon>Mycoplasmataceae</taxon>
        <taxon>Mycoplasma</taxon>
    </lineage>
</organism>
<gene>
    <name evidence="1" type="primary">ligA</name>
    <name type="ordered locus">MSC_0764</name>
</gene>
<comment type="function">
    <text evidence="1">DNA ligase that catalyzes the formation of phosphodiester linkages between 5'-phosphoryl and 3'-hydroxyl groups in double-stranded DNA using NAD as a coenzyme and as the energy source for the reaction. It is essential for DNA replication and repair of damaged DNA.</text>
</comment>
<comment type="catalytic activity">
    <reaction evidence="1">
        <text>NAD(+) + (deoxyribonucleotide)n-3'-hydroxyl + 5'-phospho-(deoxyribonucleotide)m = (deoxyribonucleotide)n+m + AMP + beta-nicotinamide D-nucleotide.</text>
        <dbReference type="EC" id="6.5.1.2"/>
    </reaction>
</comment>
<comment type="cofactor">
    <cofactor evidence="1">
        <name>Mg(2+)</name>
        <dbReference type="ChEBI" id="CHEBI:18420"/>
    </cofactor>
    <cofactor evidence="1">
        <name>Mn(2+)</name>
        <dbReference type="ChEBI" id="CHEBI:29035"/>
    </cofactor>
</comment>
<comment type="similarity">
    <text evidence="1">Belongs to the NAD-dependent DNA ligase family. LigA subfamily.</text>
</comment>
<keyword id="KW-0227">DNA damage</keyword>
<keyword id="KW-0234">DNA repair</keyword>
<keyword id="KW-0235">DNA replication</keyword>
<keyword id="KW-0436">Ligase</keyword>
<keyword id="KW-0460">Magnesium</keyword>
<keyword id="KW-0464">Manganese</keyword>
<keyword id="KW-0479">Metal-binding</keyword>
<keyword id="KW-0520">NAD</keyword>
<keyword id="KW-1185">Reference proteome</keyword>
<keyword id="KW-0862">Zinc</keyword>
<protein>
    <recommendedName>
        <fullName evidence="1">DNA ligase</fullName>
        <ecNumber evidence="1">6.5.1.2</ecNumber>
    </recommendedName>
    <alternativeName>
        <fullName evidence="1">Polydeoxyribonucleotide synthase [NAD(+)]</fullName>
    </alternativeName>
</protein>
<evidence type="ECO:0000255" key="1">
    <source>
        <dbReference type="HAMAP-Rule" id="MF_01588"/>
    </source>
</evidence>
<feature type="chain" id="PRO_0000313325" description="DNA ligase">
    <location>
        <begin position="1"/>
        <end position="668"/>
    </location>
</feature>
<feature type="domain" description="BRCT" evidence="1">
    <location>
        <begin position="588"/>
        <end position="668"/>
    </location>
</feature>
<feature type="active site" description="N6-AMP-lysine intermediate" evidence="1">
    <location>
        <position position="116"/>
    </location>
</feature>
<feature type="binding site" evidence="1">
    <location>
        <begin position="34"/>
        <end position="38"/>
    </location>
    <ligand>
        <name>NAD(+)</name>
        <dbReference type="ChEBI" id="CHEBI:57540"/>
    </ligand>
</feature>
<feature type="binding site" evidence="1">
    <location>
        <begin position="83"/>
        <end position="84"/>
    </location>
    <ligand>
        <name>NAD(+)</name>
        <dbReference type="ChEBI" id="CHEBI:57540"/>
    </ligand>
</feature>
<feature type="binding site" evidence="1">
    <location>
        <position position="114"/>
    </location>
    <ligand>
        <name>NAD(+)</name>
        <dbReference type="ChEBI" id="CHEBI:57540"/>
    </ligand>
</feature>
<feature type="binding site" evidence="1">
    <location>
        <position position="137"/>
    </location>
    <ligand>
        <name>NAD(+)</name>
        <dbReference type="ChEBI" id="CHEBI:57540"/>
    </ligand>
</feature>
<feature type="binding site" evidence="1">
    <location>
        <position position="171"/>
    </location>
    <ligand>
        <name>NAD(+)</name>
        <dbReference type="ChEBI" id="CHEBI:57540"/>
    </ligand>
</feature>
<feature type="binding site" evidence="1">
    <location>
        <position position="286"/>
    </location>
    <ligand>
        <name>NAD(+)</name>
        <dbReference type="ChEBI" id="CHEBI:57540"/>
    </ligand>
</feature>
<feature type="binding site" evidence="1">
    <location>
        <position position="310"/>
    </location>
    <ligand>
        <name>NAD(+)</name>
        <dbReference type="ChEBI" id="CHEBI:57540"/>
    </ligand>
</feature>
<feature type="binding site" evidence="1">
    <location>
        <position position="404"/>
    </location>
    <ligand>
        <name>Zn(2+)</name>
        <dbReference type="ChEBI" id="CHEBI:29105"/>
    </ligand>
</feature>
<feature type="binding site" evidence="1">
    <location>
        <position position="407"/>
    </location>
    <ligand>
        <name>Zn(2+)</name>
        <dbReference type="ChEBI" id="CHEBI:29105"/>
    </ligand>
</feature>
<feature type="binding site" evidence="1">
    <location>
        <position position="422"/>
    </location>
    <ligand>
        <name>Zn(2+)</name>
        <dbReference type="ChEBI" id="CHEBI:29105"/>
    </ligand>
</feature>
<feature type="binding site" evidence="1">
    <location>
        <position position="427"/>
    </location>
    <ligand>
        <name>Zn(2+)</name>
        <dbReference type="ChEBI" id="CHEBI:29105"/>
    </ligand>
</feature>
<name>DNLJ_MYCMS</name>